<evidence type="ECO:0000255" key="1">
    <source>
        <dbReference type="HAMAP-Rule" id="MF_00368"/>
    </source>
</evidence>
<evidence type="ECO:0000305" key="2"/>
<reference key="1">
    <citation type="journal article" date="2004" name="Proc. Natl. Acad. Sci. U.S.A.">
        <title>The louse-borne human pathogen Bartonella quintana is a genomic derivative of the zoonotic agent Bartonella henselae.</title>
        <authorList>
            <person name="Alsmark U.C.M."/>
            <person name="Frank A.C."/>
            <person name="Karlberg E.O."/>
            <person name="Legault B.-A."/>
            <person name="Ardell D.H."/>
            <person name="Canbaeck B."/>
            <person name="Eriksson A.-S."/>
            <person name="Naeslund A.K."/>
            <person name="Handley S.A."/>
            <person name="Huvet M."/>
            <person name="La Scola B."/>
            <person name="Holmberg M."/>
            <person name="Andersson S.G.E."/>
        </authorList>
    </citation>
    <scope>NUCLEOTIDE SEQUENCE [LARGE SCALE GENOMIC DNA]</scope>
    <source>
        <strain>ATCC 49882 / DSM 28221 / CCUG 30454 / Houston 1</strain>
    </source>
</reference>
<comment type="function">
    <text evidence="1">Forms part of the ribosomal stalk which helps the ribosome interact with GTP-bound translation factors. Is thus essential for accurate translation.</text>
</comment>
<comment type="subunit">
    <text evidence="1">Homodimer. Part of the ribosomal stalk of the 50S ribosomal subunit. Forms a multimeric L10(L12)X complex, where L10 forms an elongated spine to which 2 to 4 L12 dimers bind in a sequential fashion. Binds GTP-bound translation factors.</text>
</comment>
<comment type="similarity">
    <text evidence="1">Belongs to the bacterial ribosomal protein bL12 family.</text>
</comment>
<protein>
    <recommendedName>
        <fullName evidence="1">Large ribosomal subunit protein bL12</fullName>
    </recommendedName>
    <alternativeName>
        <fullName evidence="2">50S ribosomal protein L7/L12</fullName>
    </alternativeName>
</protein>
<sequence length="123" mass="12715">MADLAKIVEDLSNLTVLEAAELSKLLEEKWGVSAAAPVAVAAVAGAAAPVAEEKTEFDVILVEGGAQKINVIKEVRALTGLGLKEAKDLVEGAPKPIKEGASKDEAEKIKSQLEAAGAKVELK</sequence>
<proteinExistence type="inferred from homology"/>
<keyword id="KW-0687">Ribonucleoprotein</keyword>
<keyword id="KW-0689">Ribosomal protein</keyword>
<dbReference type="EMBL" id="BX897699">
    <property type="protein sequence ID" value="CAF27413.1"/>
    <property type="molecule type" value="Genomic_DNA"/>
</dbReference>
<dbReference type="RefSeq" id="WP_011180533.1">
    <property type="nucleotide sequence ID" value="NZ_LRIJ02000001.1"/>
</dbReference>
<dbReference type="SMR" id="Q6G3X6"/>
<dbReference type="PaxDb" id="283166-BH06090"/>
<dbReference type="EnsemblBacteria" id="CAF27413">
    <property type="protein sequence ID" value="CAF27413"/>
    <property type="gene ID" value="BH06090"/>
</dbReference>
<dbReference type="GeneID" id="92985665"/>
<dbReference type="KEGG" id="bhe:BH06090"/>
<dbReference type="eggNOG" id="COG0222">
    <property type="taxonomic scope" value="Bacteria"/>
</dbReference>
<dbReference type="OrthoDB" id="9811748at2"/>
<dbReference type="Proteomes" id="UP000000421">
    <property type="component" value="Chromosome"/>
</dbReference>
<dbReference type="GO" id="GO:0022625">
    <property type="term" value="C:cytosolic large ribosomal subunit"/>
    <property type="evidence" value="ECO:0007669"/>
    <property type="project" value="TreeGrafter"/>
</dbReference>
<dbReference type="GO" id="GO:0003729">
    <property type="term" value="F:mRNA binding"/>
    <property type="evidence" value="ECO:0007669"/>
    <property type="project" value="TreeGrafter"/>
</dbReference>
<dbReference type="GO" id="GO:0003735">
    <property type="term" value="F:structural constituent of ribosome"/>
    <property type="evidence" value="ECO:0007669"/>
    <property type="project" value="InterPro"/>
</dbReference>
<dbReference type="GO" id="GO:0006412">
    <property type="term" value="P:translation"/>
    <property type="evidence" value="ECO:0007669"/>
    <property type="project" value="UniProtKB-UniRule"/>
</dbReference>
<dbReference type="CDD" id="cd00387">
    <property type="entry name" value="Ribosomal_L7_L12"/>
    <property type="match status" value="1"/>
</dbReference>
<dbReference type="FunFam" id="3.30.1390.10:FF:000001">
    <property type="entry name" value="50S ribosomal protein L7/L12"/>
    <property type="match status" value="1"/>
</dbReference>
<dbReference type="Gene3D" id="3.30.1390.10">
    <property type="match status" value="1"/>
</dbReference>
<dbReference type="Gene3D" id="1.20.5.710">
    <property type="entry name" value="Single helix bin"/>
    <property type="match status" value="1"/>
</dbReference>
<dbReference type="HAMAP" id="MF_00368">
    <property type="entry name" value="Ribosomal_bL12"/>
    <property type="match status" value="1"/>
</dbReference>
<dbReference type="InterPro" id="IPR000206">
    <property type="entry name" value="Ribosomal_bL12"/>
</dbReference>
<dbReference type="InterPro" id="IPR013823">
    <property type="entry name" value="Ribosomal_bL12_C"/>
</dbReference>
<dbReference type="InterPro" id="IPR014719">
    <property type="entry name" value="Ribosomal_bL12_C/ClpS-like"/>
</dbReference>
<dbReference type="InterPro" id="IPR008932">
    <property type="entry name" value="Ribosomal_bL12_oligo"/>
</dbReference>
<dbReference type="InterPro" id="IPR036235">
    <property type="entry name" value="Ribosomal_bL12_oligo_N_sf"/>
</dbReference>
<dbReference type="NCBIfam" id="TIGR00855">
    <property type="entry name" value="L12"/>
    <property type="match status" value="1"/>
</dbReference>
<dbReference type="PANTHER" id="PTHR45987">
    <property type="entry name" value="39S RIBOSOMAL PROTEIN L12"/>
    <property type="match status" value="1"/>
</dbReference>
<dbReference type="PANTHER" id="PTHR45987:SF4">
    <property type="entry name" value="LARGE RIBOSOMAL SUBUNIT PROTEIN BL12M"/>
    <property type="match status" value="1"/>
</dbReference>
<dbReference type="Pfam" id="PF00542">
    <property type="entry name" value="Ribosomal_L12"/>
    <property type="match status" value="1"/>
</dbReference>
<dbReference type="Pfam" id="PF16320">
    <property type="entry name" value="Ribosomal_L12_N"/>
    <property type="match status" value="1"/>
</dbReference>
<dbReference type="SUPFAM" id="SSF54736">
    <property type="entry name" value="ClpS-like"/>
    <property type="match status" value="1"/>
</dbReference>
<dbReference type="SUPFAM" id="SSF48300">
    <property type="entry name" value="Ribosomal protein L7/12, oligomerisation (N-terminal) domain"/>
    <property type="match status" value="1"/>
</dbReference>
<feature type="chain" id="PRO_0000243388" description="Large ribosomal subunit protein bL12">
    <location>
        <begin position="1"/>
        <end position="123"/>
    </location>
</feature>
<organism>
    <name type="scientific">Bartonella henselae (strain ATCC 49882 / DSM 28221 / CCUG 30454 / Houston 1)</name>
    <name type="common">Rochalimaea henselae</name>
    <dbReference type="NCBI Taxonomy" id="283166"/>
    <lineage>
        <taxon>Bacteria</taxon>
        <taxon>Pseudomonadati</taxon>
        <taxon>Pseudomonadota</taxon>
        <taxon>Alphaproteobacteria</taxon>
        <taxon>Hyphomicrobiales</taxon>
        <taxon>Bartonellaceae</taxon>
        <taxon>Bartonella</taxon>
    </lineage>
</organism>
<gene>
    <name evidence="1" type="primary">rplL</name>
    <name type="ordered locus">BH06090</name>
</gene>
<name>RL7_BARHE</name>
<accession>Q6G3X6</accession>